<gene>
    <name evidence="1" type="primary">hypA</name>
    <name type="ordered locus">Tery_0798</name>
</gene>
<proteinExistence type="inferred from homology"/>
<feature type="chain" id="PRO_1000023863" description="Hydrogenase maturation factor HypA">
    <location>
        <begin position="1"/>
        <end position="114"/>
    </location>
</feature>
<feature type="binding site" evidence="1">
    <location>
        <position position="2"/>
    </location>
    <ligand>
        <name>Ni(2+)</name>
        <dbReference type="ChEBI" id="CHEBI:49786"/>
    </ligand>
</feature>
<feature type="binding site" evidence="1">
    <location>
        <position position="70"/>
    </location>
    <ligand>
        <name>Zn(2+)</name>
        <dbReference type="ChEBI" id="CHEBI:29105"/>
    </ligand>
</feature>
<feature type="binding site" evidence="1">
    <location>
        <position position="73"/>
    </location>
    <ligand>
        <name>Zn(2+)</name>
        <dbReference type="ChEBI" id="CHEBI:29105"/>
    </ligand>
</feature>
<feature type="binding site" evidence="1">
    <location>
        <position position="86"/>
    </location>
    <ligand>
        <name>Zn(2+)</name>
        <dbReference type="ChEBI" id="CHEBI:29105"/>
    </ligand>
</feature>
<feature type="binding site" evidence="1">
    <location>
        <position position="89"/>
    </location>
    <ligand>
        <name>Zn(2+)</name>
        <dbReference type="ChEBI" id="CHEBI:29105"/>
    </ligand>
</feature>
<comment type="function">
    <text evidence="1">Involved in the maturation of [NiFe] hydrogenases. Required for nickel insertion into the metal center of the hydrogenase.</text>
</comment>
<comment type="similarity">
    <text evidence="1">Belongs to the HypA/HybF family.</text>
</comment>
<keyword id="KW-0479">Metal-binding</keyword>
<keyword id="KW-0533">Nickel</keyword>
<keyword id="KW-0862">Zinc</keyword>
<accession>Q117V9</accession>
<name>HYPA_TRIEI</name>
<reference key="1">
    <citation type="journal article" date="2015" name="Proc. Natl. Acad. Sci. U.S.A.">
        <title>Trichodesmium genome maintains abundant, widespread noncoding DNA in situ, despite oligotrophic lifestyle.</title>
        <authorList>
            <person name="Walworth N."/>
            <person name="Pfreundt U."/>
            <person name="Nelson W.C."/>
            <person name="Mincer T."/>
            <person name="Heidelberg J.F."/>
            <person name="Fu F."/>
            <person name="Waterbury J.B."/>
            <person name="Glavina del Rio T."/>
            <person name="Goodwin L."/>
            <person name="Kyrpides N.C."/>
            <person name="Land M.L."/>
            <person name="Woyke T."/>
            <person name="Hutchins D.A."/>
            <person name="Hess W.R."/>
            <person name="Webb E.A."/>
        </authorList>
    </citation>
    <scope>NUCLEOTIDE SEQUENCE [LARGE SCALE GENOMIC DNA]</scope>
    <source>
        <strain>IMS101</strain>
    </source>
</reference>
<dbReference type="EMBL" id="CP000393">
    <property type="protein sequence ID" value="ABG50215.1"/>
    <property type="molecule type" value="Genomic_DNA"/>
</dbReference>
<dbReference type="RefSeq" id="WP_011610607.1">
    <property type="nucleotide sequence ID" value="NC_008312.1"/>
</dbReference>
<dbReference type="SMR" id="Q117V9"/>
<dbReference type="STRING" id="203124.Tery_0798"/>
<dbReference type="KEGG" id="ter:Tery_0798"/>
<dbReference type="eggNOG" id="COG0375">
    <property type="taxonomic scope" value="Bacteria"/>
</dbReference>
<dbReference type="HOGENOM" id="CLU_126929_0_0_3"/>
<dbReference type="OrthoDB" id="9800361at2"/>
<dbReference type="GO" id="GO:0016151">
    <property type="term" value="F:nickel cation binding"/>
    <property type="evidence" value="ECO:0007669"/>
    <property type="project" value="UniProtKB-UniRule"/>
</dbReference>
<dbReference type="GO" id="GO:0008270">
    <property type="term" value="F:zinc ion binding"/>
    <property type="evidence" value="ECO:0007669"/>
    <property type="project" value="UniProtKB-UniRule"/>
</dbReference>
<dbReference type="GO" id="GO:0051604">
    <property type="term" value="P:protein maturation"/>
    <property type="evidence" value="ECO:0007669"/>
    <property type="project" value="InterPro"/>
</dbReference>
<dbReference type="GO" id="GO:0036211">
    <property type="term" value="P:protein modification process"/>
    <property type="evidence" value="ECO:0007669"/>
    <property type="project" value="UniProtKB-UniRule"/>
</dbReference>
<dbReference type="Gene3D" id="3.30.2320.80">
    <property type="match status" value="1"/>
</dbReference>
<dbReference type="HAMAP" id="MF_00213">
    <property type="entry name" value="HypA_HybF"/>
    <property type="match status" value="1"/>
</dbReference>
<dbReference type="InterPro" id="IPR020538">
    <property type="entry name" value="Hydgase_Ni_incorp_HypA/HybF_CS"/>
</dbReference>
<dbReference type="InterPro" id="IPR000688">
    <property type="entry name" value="HypA/HybF"/>
</dbReference>
<dbReference type="NCBIfam" id="TIGR00100">
    <property type="entry name" value="hypA"/>
    <property type="match status" value="1"/>
</dbReference>
<dbReference type="PANTHER" id="PTHR34535">
    <property type="entry name" value="HYDROGENASE MATURATION FACTOR HYPA"/>
    <property type="match status" value="1"/>
</dbReference>
<dbReference type="PANTHER" id="PTHR34535:SF3">
    <property type="entry name" value="HYDROGENASE MATURATION FACTOR HYPA"/>
    <property type="match status" value="1"/>
</dbReference>
<dbReference type="Pfam" id="PF01155">
    <property type="entry name" value="HypA"/>
    <property type="match status" value="1"/>
</dbReference>
<dbReference type="PIRSF" id="PIRSF004761">
    <property type="entry name" value="Hydrgn_mat_HypA"/>
    <property type="match status" value="1"/>
</dbReference>
<dbReference type="PROSITE" id="PS01249">
    <property type="entry name" value="HYPA"/>
    <property type="match status" value="1"/>
</dbReference>
<sequence>MHELGITQNIVAIVAENANNRLIKRVTLEIGELSAIMPNAIEFCFDVCTQGTVLEGATLEIIKIPGLGKCRQCATEIPLEQPFGICHVCNSVELDIIQGQELKIKEMEVEELSV</sequence>
<organism>
    <name type="scientific">Trichodesmium erythraeum (strain IMS101)</name>
    <dbReference type="NCBI Taxonomy" id="203124"/>
    <lineage>
        <taxon>Bacteria</taxon>
        <taxon>Bacillati</taxon>
        <taxon>Cyanobacteriota</taxon>
        <taxon>Cyanophyceae</taxon>
        <taxon>Oscillatoriophycideae</taxon>
        <taxon>Oscillatoriales</taxon>
        <taxon>Microcoleaceae</taxon>
        <taxon>Trichodesmium</taxon>
    </lineage>
</organism>
<evidence type="ECO:0000255" key="1">
    <source>
        <dbReference type="HAMAP-Rule" id="MF_00213"/>
    </source>
</evidence>
<protein>
    <recommendedName>
        <fullName evidence="1">Hydrogenase maturation factor HypA</fullName>
    </recommendedName>
</protein>